<proteinExistence type="evidence at protein level"/>
<feature type="signal peptide" evidence="2">
    <location>
        <begin position="1"/>
        <end position="32"/>
    </location>
</feature>
<feature type="chain" id="PRO_0000287097" description="Transmembrane protein 132A">
    <location>
        <begin position="33"/>
        <end position="1018"/>
    </location>
</feature>
<feature type="topological domain" description="Extracellular" evidence="2">
    <location>
        <begin position="33"/>
        <end position="846"/>
    </location>
</feature>
<feature type="transmembrane region" description="Helical" evidence="2">
    <location>
        <begin position="847"/>
        <end position="867"/>
    </location>
</feature>
<feature type="topological domain" description="Cytoplasmic" evidence="2">
    <location>
        <begin position="868"/>
        <end position="1018"/>
    </location>
</feature>
<feature type="region of interest" description="Binds to HSPA5/GRP78" evidence="1">
    <location>
        <begin position="606"/>
        <end position="911"/>
    </location>
</feature>
<feature type="region of interest" description="Confers cellular localization similar to full-length form" evidence="1">
    <location>
        <begin position="666"/>
        <end position="1018"/>
    </location>
</feature>
<feature type="region of interest" description="Disordered" evidence="3">
    <location>
        <begin position="807"/>
        <end position="833"/>
    </location>
</feature>
<feature type="region of interest" description="Disordered" evidence="3">
    <location>
        <begin position="900"/>
        <end position="956"/>
    </location>
</feature>
<feature type="compositionally biased region" description="Basic and acidic residues" evidence="3">
    <location>
        <begin position="807"/>
        <end position="818"/>
    </location>
</feature>
<feature type="compositionally biased region" description="Acidic residues" evidence="3">
    <location>
        <begin position="819"/>
        <end position="830"/>
    </location>
</feature>
<feature type="compositionally biased region" description="Low complexity" evidence="3">
    <location>
        <begin position="906"/>
        <end position="922"/>
    </location>
</feature>
<feature type="compositionally biased region" description="Low complexity" evidence="3">
    <location>
        <begin position="932"/>
        <end position="944"/>
    </location>
</feature>
<feature type="glycosylation site" description="N-linked (GlcNAc...) asparagine" evidence="2">
    <location>
        <position position="276"/>
    </location>
</feature>
<feature type="sequence conflict" description="In Ref. 2; BAC33373." evidence="4" ref="2">
    <original>L</original>
    <variation>M</variation>
    <location>
        <position position="386"/>
    </location>
</feature>
<organism>
    <name type="scientific">Mus musculus</name>
    <name type="common">Mouse</name>
    <dbReference type="NCBI Taxonomy" id="10090"/>
    <lineage>
        <taxon>Eukaryota</taxon>
        <taxon>Metazoa</taxon>
        <taxon>Chordata</taxon>
        <taxon>Craniata</taxon>
        <taxon>Vertebrata</taxon>
        <taxon>Euteleostomi</taxon>
        <taxon>Mammalia</taxon>
        <taxon>Eutheria</taxon>
        <taxon>Euarchontoglires</taxon>
        <taxon>Glires</taxon>
        <taxon>Rodentia</taxon>
        <taxon>Myomorpha</taxon>
        <taxon>Muroidea</taxon>
        <taxon>Muridae</taxon>
        <taxon>Murinae</taxon>
        <taxon>Mus</taxon>
        <taxon>Mus</taxon>
    </lineage>
</organism>
<protein>
    <recommendedName>
        <fullName>Transmembrane protein 132A</fullName>
    </recommendedName>
    <alternativeName>
        <fullName>HSPA5-binding protein 1</fullName>
    </alternativeName>
</protein>
<reference key="1">
    <citation type="journal article" date="2004" name="DNA Res.">
        <title>Prediction of the coding sequences of mouse homologues of KIAA gene: IV. The complete nucleotide sequences of 500 mouse KIAA-homologous cDNAs identified by screening of terminal sequences of cDNA clones randomly sampled from size-fractionated libraries.</title>
        <authorList>
            <person name="Okazaki N."/>
            <person name="Kikuno R."/>
            <person name="Ohara R."/>
            <person name="Inamoto S."/>
            <person name="Koseki H."/>
            <person name="Hiraoka S."/>
            <person name="Saga Y."/>
            <person name="Seino S."/>
            <person name="Nishimura M."/>
            <person name="Kaisho T."/>
            <person name="Hoshino K."/>
            <person name="Kitamura H."/>
            <person name="Nagase T."/>
            <person name="Ohara O."/>
            <person name="Koga H."/>
        </authorList>
    </citation>
    <scope>NUCLEOTIDE SEQUENCE [LARGE SCALE MRNA]</scope>
    <source>
        <tissue>Brain</tissue>
    </source>
</reference>
<reference key="2">
    <citation type="journal article" date="2005" name="Science">
        <title>The transcriptional landscape of the mammalian genome.</title>
        <authorList>
            <person name="Carninci P."/>
            <person name="Kasukawa T."/>
            <person name="Katayama S."/>
            <person name="Gough J."/>
            <person name="Frith M.C."/>
            <person name="Maeda N."/>
            <person name="Oyama R."/>
            <person name="Ravasi T."/>
            <person name="Lenhard B."/>
            <person name="Wells C."/>
            <person name="Kodzius R."/>
            <person name="Shimokawa K."/>
            <person name="Bajic V.B."/>
            <person name="Brenner S.E."/>
            <person name="Batalov S."/>
            <person name="Forrest A.R."/>
            <person name="Zavolan M."/>
            <person name="Davis M.J."/>
            <person name="Wilming L.G."/>
            <person name="Aidinis V."/>
            <person name="Allen J.E."/>
            <person name="Ambesi-Impiombato A."/>
            <person name="Apweiler R."/>
            <person name="Aturaliya R.N."/>
            <person name="Bailey T.L."/>
            <person name="Bansal M."/>
            <person name="Baxter L."/>
            <person name="Beisel K.W."/>
            <person name="Bersano T."/>
            <person name="Bono H."/>
            <person name="Chalk A.M."/>
            <person name="Chiu K.P."/>
            <person name="Choudhary V."/>
            <person name="Christoffels A."/>
            <person name="Clutterbuck D.R."/>
            <person name="Crowe M.L."/>
            <person name="Dalla E."/>
            <person name="Dalrymple B.P."/>
            <person name="de Bono B."/>
            <person name="Della Gatta G."/>
            <person name="di Bernardo D."/>
            <person name="Down T."/>
            <person name="Engstrom P."/>
            <person name="Fagiolini M."/>
            <person name="Faulkner G."/>
            <person name="Fletcher C.F."/>
            <person name="Fukushima T."/>
            <person name="Furuno M."/>
            <person name="Futaki S."/>
            <person name="Gariboldi M."/>
            <person name="Georgii-Hemming P."/>
            <person name="Gingeras T.R."/>
            <person name="Gojobori T."/>
            <person name="Green R.E."/>
            <person name="Gustincich S."/>
            <person name="Harbers M."/>
            <person name="Hayashi Y."/>
            <person name="Hensch T.K."/>
            <person name="Hirokawa N."/>
            <person name="Hill D."/>
            <person name="Huminiecki L."/>
            <person name="Iacono M."/>
            <person name="Ikeo K."/>
            <person name="Iwama A."/>
            <person name="Ishikawa T."/>
            <person name="Jakt M."/>
            <person name="Kanapin A."/>
            <person name="Katoh M."/>
            <person name="Kawasawa Y."/>
            <person name="Kelso J."/>
            <person name="Kitamura H."/>
            <person name="Kitano H."/>
            <person name="Kollias G."/>
            <person name="Krishnan S.P."/>
            <person name="Kruger A."/>
            <person name="Kummerfeld S.K."/>
            <person name="Kurochkin I.V."/>
            <person name="Lareau L.F."/>
            <person name="Lazarevic D."/>
            <person name="Lipovich L."/>
            <person name="Liu J."/>
            <person name="Liuni S."/>
            <person name="McWilliam S."/>
            <person name="Madan Babu M."/>
            <person name="Madera M."/>
            <person name="Marchionni L."/>
            <person name="Matsuda H."/>
            <person name="Matsuzawa S."/>
            <person name="Miki H."/>
            <person name="Mignone F."/>
            <person name="Miyake S."/>
            <person name="Morris K."/>
            <person name="Mottagui-Tabar S."/>
            <person name="Mulder N."/>
            <person name="Nakano N."/>
            <person name="Nakauchi H."/>
            <person name="Ng P."/>
            <person name="Nilsson R."/>
            <person name="Nishiguchi S."/>
            <person name="Nishikawa S."/>
            <person name="Nori F."/>
            <person name="Ohara O."/>
            <person name="Okazaki Y."/>
            <person name="Orlando V."/>
            <person name="Pang K.C."/>
            <person name="Pavan W.J."/>
            <person name="Pavesi G."/>
            <person name="Pesole G."/>
            <person name="Petrovsky N."/>
            <person name="Piazza S."/>
            <person name="Reed J."/>
            <person name="Reid J.F."/>
            <person name="Ring B.Z."/>
            <person name="Ringwald M."/>
            <person name="Rost B."/>
            <person name="Ruan Y."/>
            <person name="Salzberg S.L."/>
            <person name="Sandelin A."/>
            <person name="Schneider C."/>
            <person name="Schoenbach C."/>
            <person name="Sekiguchi K."/>
            <person name="Semple C.A."/>
            <person name="Seno S."/>
            <person name="Sessa L."/>
            <person name="Sheng Y."/>
            <person name="Shibata Y."/>
            <person name="Shimada H."/>
            <person name="Shimada K."/>
            <person name="Silva D."/>
            <person name="Sinclair B."/>
            <person name="Sperling S."/>
            <person name="Stupka E."/>
            <person name="Sugiura K."/>
            <person name="Sultana R."/>
            <person name="Takenaka Y."/>
            <person name="Taki K."/>
            <person name="Tammoja K."/>
            <person name="Tan S.L."/>
            <person name="Tang S."/>
            <person name="Taylor M.S."/>
            <person name="Tegner J."/>
            <person name="Teichmann S.A."/>
            <person name="Ueda H.R."/>
            <person name="van Nimwegen E."/>
            <person name="Verardo R."/>
            <person name="Wei C.L."/>
            <person name="Yagi K."/>
            <person name="Yamanishi H."/>
            <person name="Zabarovsky E."/>
            <person name="Zhu S."/>
            <person name="Zimmer A."/>
            <person name="Hide W."/>
            <person name="Bult C."/>
            <person name="Grimmond S.M."/>
            <person name="Teasdale R.D."/>
            <person name="Liu E.T."/>
            <person name="Brusic V."/>
            <person name="Quackenbush J."/>
            <person name="Wahlestedt C."/>
            <person name="Mattick J.S."/>
            <person name="Hume D.A."/>
            <person name="Kai C."/>
            <person name="Sasaki D."/>
            <person name="Tomaru Y."/>
            <person name="Fukuda S."/>
            <person name="Kanamori-Katayama M."/>
            <person name="Suzuki M."/>
            <person name="Aoki J."/>
            <person name="Arakawa T."/>
            <person name="Iida J."/>
            <person name="Imamura K."/>
            <person name="Itoh M."/>
            <person name="Kato T."/>
            <person name="Kawaji H."/>
            <person name="Kawagashira N."/>
            <person name="Kawashima T."/>
            <person name="Kojima M."/>
            <person name="Kondo S."/>
            <person name="Konno H."/>
            <person name="Nakano K."/>
            <person name="Ninomiya N."/>
            <person name="Nishio T."/>
            <person name="Okada M."/>
            <person name="Plessy C."/>
            <person name="Shibata K."/>
            <person name="Shiraki T."/>
            <person name="Suzuki S."/>
            <person name="Tagami M."/>
            <person name="Waki K."/>
            <person name="Watahiki A."/>
            <person name="Okamura-Oho Y."/>
            <person name="Suzuki H."/>
            <person name="Kawai J."/>
            <person name="Hayashizaki Y."/>
        </authorList>
    </citation>
    <scope>NUCLEOTIDE SEQUENCE [LARGE SCALE MRNA]</scope>
    <source>
        <strain>C57BL/6J</strain>
        <tissue>Head</tissue>
    </source>
</reference>
<reference key="3">
    <citation type="journal article" date="2004" name="Genome Res.">
        <title>The status, quality, and expansion of the NIH full-length cDNA project: the Mammalian Gene Collection (MGC).</title>
        <authorList>
            <consortium name="The MGC Project Team"/>
        </authorList>
    </citation>
    <scope>NUCLEOTIDE SEQUENCE [LARGE SCALE MRNA]</scope>
    <source>
        <strain>FVB/N</strain>
        <tissue>Mammary tumor</tissue>
    </source>
</reference>
<reference key="4">
    <citation type="journal article" date="2010" name="Cell">
        <title>A tissue-specific atlas of mouse protein phosphorylation and expression.</title>
        <authorList>
            <person name="Huttlin E.L."/>
            <person name="Jedrychowski M.P."/>
            <person name="Elias J.E."/>
            <person name="Goswami T."/>
            <person name="Rad R."/>
            <person name="Beausoleil S.A."/>
            <person name="Villen J."/>
            <person name="Haas W."/>
            <person name="Sowa M.E."/>
            <person name="Gygi S.P."/>
        </authorList>
    </citation>
    <scope>IDENTIFICATION BY MASS SPECTROMETRY [LARGE SCALE ANALYSIS]</scope>
    <source>
        <tissue>Brain</tissue>
    </source>
</reference>
<name>T132A_MOUSE</name>
<comment type="function">
    <text evidence="1">May play a role in embryonic and postnatal development of the brain. Increased resistance to cell death induced by serum starvation in cultured cells. Regulates cAMP-induced GFAP gene expression via STAT3 phosphorylation (By similarity).</text>
</comment>
<comment type="subunit">
    <text evidence="1">Interacts with HSPA5/GRP78.</text>
</comment>
<comment type="subcellular location">
    <subcellularLocation>
        <location evidence="1">Golgi apparatus membrane</location>
        <topology evidence="1">Single-pass type I membrane protein</topology>
    </subcellularLocation>
    <subcellularLocation>
        <location evidence="1">Endoplasmic reticulum membrane</location>
        <topology evidence="1">Single-pass type I membrane protein</topology>
    </subcellularLocation>
</comment>
<comment type="similarity">
    <text evidence="4">Belongs to the TMEM132 family.</text>
</comment>
<comment type="sequence caution" evidence="4">
    <conflict type="erroneous termination">
        <sequence resource="EMBL-CDS" id="BAC33373"/>
    </conflict>
    <text>Truncated C-terminus.</text>
</comment>
<comment type="sequence caution" evidence="4">
    <conflict type="erroneous initiation">
        <sequence resource="EMBL-CDS" id="BAD32485"/>
    </conflict>
</comment>
<gene>
    <name type="primary">Tmem132a</name>
    <name type="synonym">Kiaa1583</name>
</gene>
<accession>Q922P8</accession>
<accession>Q69ZF9</accession>
<accession>Q8BX93</accession>
<keyword id="KW-0256">Endoplasmic reticulum</keyword>
<keyword id="KW-0325">Glycoprotein</keyword>
<keyword id="KW-0333">Golgi apparatus</keyword>
<keyword id="KW-0472">Membrane</keyword>
<keyword id="KW-1185">Reference proteome</keyword>
<keyword id="KW-0732">Signal</keyword>
<keyword id="KW-0812">Transmembrane</keyword>
<keyword id="KW-1133">Transmembrane helix</keyword>
<sequence>MTERKAAAPRGPYGAWFCLLVALALEVVRVSSNHDTLDPIYLPVALELLDAPEHFRVQQVGHYPPANSSLASRSETFLLMQPWPRAQPLLRASYPPFATQQVVPPRVTEPHRRPVPWDVRAVSVEAAVTPAEPYARVLFHLKGQDWPPGPGSLPCARLHATHPAGTAHRACRFQPSLGACVVELQFPSHWFSQSATTRAELAYTLEPAGEGPGGCGLGTEEEPREQALPVGGVELHPEDPPQYQEVPLDEAVTLRAPDVPMRPGQLFTATLLLRHNFTASLLTLRIKVKKGLQVIAARPAQPTLWTAKLDRFKGSKHHTSLITCHRAGPAGPDSSPLELSEFLWVDFAVENSTGGGVAVTRPVTWQLEYPGQAPEAEKDKMVWEILVSERDIRALIPLAKAEELVNTAPLTGVPQRIPVRLVTVDSGGALEEVTEHIGCESANTQVLQVSEACDAVFVAGQESRGAKGVRVDFWWRRLRASLKLTVWAPLLPLRIELTDTTLEQIRGWRVPGSAEGQLEPETAAEEVERRSRGCRLQYQRAGVRFLVPFAAHPLDGGRRLTHLLGPDWLLDVSHLVAAHAHVQDPRIASLEGGRILVGREPGVTSIEVRSPLSDAILGEQALAVTDDKVSVLDLRVQPVMGISLSLSRGMSHPGEVTATCWAQSALPAPKQEVALSLWLSFSDHTLAPAELYDRNDLGLSVSAEEPSAVLPAEEQGAQLGVVVSGVGAEGLPLHVALHPPEPCRRGRHRVPLASGTAWLGLPPLPTPVPALPSSPVRTSPFTEATVEGKRQIAGDMGGHVGIRGKFERAEEEAGKEENEAKEEEEDEEEMVPAPQRVTDLELGMYALLGIFCLAILIFLVNGVVFVLRYQRKEPPDSATDPASPQPHNWVWLGTNQEELSRQLDRCSSSGPPKGEGGCPCESGAGGDASTVAPSASESPAGSSSTLARKEAGGRRKRVEFVTFAPAPPTQPPEEPVGAPAVQSILVAGEEDIRWVCEDMGLKDPEELRNYMERIRGSS</sequence>
<dbReference type="EMBL" id="AK173207">
    <property type="protein sequence ID" value="BAD32485.1"/>
    <property type="status" value="ALT_INIT"/>
    <property type="molecule type" value="mRNA"/>
</dbReference>
<dbReference type="EMBL" id="AK048556">
    <property type="protein sequence ID" value="BAC33373.1"/>
    <property type="status" value="ALT_SEQ"/>
    <property type="molecule type" value="mRNA"/>
</dbReference>
<dbReference type="EMBL" id="BC006896">
    <property type="protein sequence ID" value="AAH06896.2"/>
    <property type="molecule type" value="mRNA"/>
</dbReference>
<dbReference type="CCDS" id="CCDS29589.1"/>
<dbReference type="RefSeq" id="NP_598565.2">
    <property type="nucleotide sequence ID" value="NM_133804.2"/>
</dbReference>
<dbReference type="SMR" id="Q922P8"/>
<dbReference type="BioGRID" id="221002">
    <property type="interactions" value="1"/>
</dbReference>
<dbReference type="FunCoup" id="Q922P8">
    <property type="interactions" value="1257"/>
</dbReference>
<dbReference type="IntAct" id="Q922P8">
    <property type="interactions" value="1"/>
</dbReference>
<dbReference type="MINT" id="Q922P8"/>
<dbReference type="STRING" id="10090.ENSMUSP00000025645"/>
<dbReference type="GlyConnect" id="2789">
    <property type="glycosylation" value="2 N-Linked glycans (1 site)"/>
</dbReference>
<dbReference type="GlyCosmos" id="Q922P8">
    <property type="glycosylation" value="2 sites, 2 glycans"/>
</dbReference>
<dbReference type="GlyGen" id="Q922P8">
    <property type="glycosylation" value="5 sites, 4 N-linked glycans (2 sites)"/>
</dbReference>
<dbReference type="iPTMnet" id="Q922P8"/>
<dbReference type="PhosphoSitePlus" id="Q922P8"/>
<dbReference type="PaxDb" id="10090-ENSMUSP00000025645"/>
<dbReference type="PeptideAtlas" id="Q922P8"/>
<dbReference type="ProteomicsDB" id="254520"/>
<dbReference type="Pumba" id="Q922P8"/>
<dbReference type="Antibodypedia" id="52906">
    <property type="antibodies" value="70 antibodies from 22 providers"/>
</dbReference>
<dbReference type="DNASU" id="98170"/>
<dbReference type="Ensembl" id="ENSMUST00000025645.14">
    <property type="protein sequence ID" value="ENSMUSP00000025645.8"/>
    <property type="gene ID" value="ENSMUSG00000024736.16"/>
</dbReference>
<dbReference type="GeneID" id="98170"/>
<dbReference type="KEGG" id="mmu:98170"/>
<dbReference type="UCSC" id="uc008grc.1">
    <property type="organism name" value="mouse"/>
</dbReference>
<dbReference type="AGR" id="MGI:2147810"/>
<dbReference type="CTD" id="54972"/>
<dbReference type="MGI" id="MGI:2147810">
    <property type="gene designation" value="Tmem132a"/>
</dbReference>
<dbReference type="VEuPathDB" id="HostDB:ENSMUSG00000024736"/>
<dbReference type="eggNOG" id="KOG4789">
    <property type="taxonomic scope" value="Eukaryota"/>
</dbReference>
<dbReference type="GeneTree" id="ENSGT00940000161414"/>
<dbReference type="HOGENOM" id="CLU_009871_0_0_1"/>
<dbReference type="InParanoid" id="Q922P8"/>
<dbReference type="OMA" id="GPCGPWL"/>
<dbReference type="OrthoDB" id="10026202at2759"/>
<dbReference type="PhylomeDB" id="Q922P8"/>
<dbReference type="TreeFam" id="TF314981"/>
<dbReference type="Reactome" id="R-MMU-381426">
    <property type="pathway name" value="Regulation of Insulin-like Growth Factor (IGF) transport and uptake by Insulin-like Growth Factor Binding Proteins (IGFBPs)"/>
</dbReference>
<dbReference type="Reactome" id="R-MMU-8957275">
    <property type="pathway name" value="Post-translational protein phosphorylation"/>
</dbReference>
<dbReference type="BioGRID-ORCS" id="98170">
    <property type="hits" value="3 hits in 80 CRISPR screens"/>
</dbReference>
<dbReference type="ChiTaRS" id="Tmem132a">
    <property type="organism name" value="mouse"/>
</dbReference>
<dbReference type="PRO" id="PR:Q922P8"/>
<dbReference type="Proteomes" id="UP000000589">
    <property type="component" value="Chromosome 19"/>
</dbReference>
<dbReference type="RNAct" id="Q922P8">
    <property type="molecule type" value="protein"/>
</dbReference>
<dbReference type="Bgee" id="ENSMUSG00000024736">
    <property type="expression patterns" value="Expressed in embryonic brain and 221 other cell types or tissues"/>
</dbReference>
<dbReference type="ExpressionAtlas" id="Q922P8">
    <property type="expression patterns" value="baseline and differential"/>
</dbReference>
<dbReference type="GO" id="GO:0005783">
    <property type="term" value="C:endoplasmic reticulum"/>
    <property type="evidence" value="ECO:0000314"/>
    <property type="project" value="MGI"/>
</dbReference>
<dbReference type="GO" id="GO:0005789">
    <property type="term" value="C:endoplasmic reticulum membrane"/>
    <property type="evidence" value="ECO:0007669"/>
    <property type="project" value="UniProtKB-SubCell"/>
</dbReference>
<dbReference type="GO" id="GO:0000139">
    <property type="term" value="C:Golgi membrane"/>
    <property type="evidence" value="ECO:0007669"/>
    <property type="project" value="UniProtKB-SubCell"/>
</dbReference>
<dbReference type="GO" id="GO:0005886">
    <property type="term" value="C:plasma membrane"/>
    <property type="evidence" value="ECO:0000314"/>
    <property type="project" value="MGI"/>
</dbReference>
<dbReference type="GO" id="GO:0042803">
    <property type="term" value="F:protein homodimerization activity"/>
    <property type="evidence" value="ECO:0000353"/>
    <property type="project" value="MGI"/>
</dbReference>
<dbReference type="GO" id="GO:0042177">
    <property type="term" value="P:negative regulation of protein catabolic process"/>
    <property type="evidence" value="ECO:0000315"/>
    <property type="project" value="MGI"/>
</dbReference>
<dbReference type="GO" id="GO:0061357">
    <property type="term" value="P:positive regulation of Wnt protein secretion"/>
    <property type="evidence" value="ECO:0000315"/>
    <property type="project" value="MGI"/>
</dbReference>
<dbReference type="GO" id="GO:0030177">
    <property type="term" value="P:positive regulation of Wnt signaling pathway"/>
    <property type="evidence" value="ECO:0000315"/>
    <property type="project" value="MGI"/>
</dbReference>
<dbReference type="InterPro" id="IPR055422">
    <property type="entry name" value="Ig_TMEM132_2nd"/>
</dbReference>
<dbReference type="InterPro" id="IPR055423">
    <property type="entry name" value="Ig_TMEM132_5th"/>
</dbReference>
<dbReference type="InterPro" id="IPR055424">
    <property type="entry name" value="Ig_TMEM132_6th"/>
</dbReference>
<dbReference type="InterPro" id="IPR026307">
    <property type="entry name" value="TMEM132"/>
</dbReference>
<dbReference type="InterPro" id="IPR055421">
    <property type="entry name" value="TMEM132_3rd"/>
</dbReference>
<dbReference type="InterPro" id="IPR031436">
    <property type="entry name" value="TMEM132_C"/>
</dbReference>
<dbReference type="InterPro" id="IPR031437">
    <property type="entry name" value="TMEM132_M"/>
</dbReference>
<dbReference type="InterPro" id="IPR031435">
    <property type="entry name" value="TMEM132_N"/>
</dbReference>
<dbReference type="PANTHER" id="PTHR13388">
    <property type="entry name" value="DETONATOR, ISOFORM E"/>
    <property type="match status" value="1"/>
</dbReference>
<dbReference type="PANTHER" id="PTHR13388:SF9">
    <property type="entry name" value="TRANSMEMBRANE PROTEIN 132A"/>
    <property type="match status" value="1"/>
</dbReference>
<dbReference type="Pfam" id="PF23481">
    <property type="entry name" value="Ig_TMEM132_2nd"/>
    <property type="match status" value="1"/>
</dbReference>
<dbReference type="Pfam" id="PF16070">
    <property type="entry name" value="Ig_TMEM132_4th"/>
    <property type="match status" value="1"/>
</dbReference>
<dbReference type="Pfam" id="PF23486">
    <property type="entry name" value="Ig_TMEM132_5th"/>
    <property type="match status" value="1"/>
</dbReference>
<dbReference type="Pfam" id="PF23487">
    <property type="entry name" value="Ig_TMEM132_6th"/>
    <property type="match status" value="1"/>
</dbReference>
<dbReference type="Pfam" id="PF23039">
    <property type="entry name" value="TMEM132_3rd"/>
    <property type="match status" value="1"/>
</dbReference>
<dbReference type="Pfam" id="PF15706">
    <property type="entry name" value="TMEM132_C"/>
    <property type="match status" value="1"/>
</dbReference>
<dbReference type="Pfam" id="PF15705">
    <property type="entry name" value="TMEM132_N"/>
    <property type="match status" value="1"/>
</dbReference>
<evidence type="ECO:0000250" key="1"/>
<evidence type="ECO:0000255" key="2"/>
<evidence type="ECO:0000256" key="3">
    <source>
        <dbReference type="SAM" id="MobiDB-lite"/>
    </source>
</evidence>
<evidence type="ECO:0000305" key="4"/>